<accession>P38031</accession>
<dbReference type="PIR" id="D61219">
    <property type="entry name" value="D61219"/>
</dbReference>
<dbReference type="PeptideAtlas" id="P38031"/>
<dbReference type="InParanoid" id="P38031"/>
<dbReference type="Proteomes" id="UP000002281">
    <property type="component" value="Unplaced"/>
</dbReference>
<dbReference type="GO" id="GO:0005576">
    <property type="term" value="C:extracellular region"/>
    <property type="evidence" value="ECO:0007669"/>
    <property type="project" value="UniProtKB-SubCell"/>
</dbReference>
<dbReference type="GO" id="GO:0004867">
    <property type="term" value="F:serine-type endopeptidase inhibitor activity"/>
    <property type="evidence" value="ECO:0007669"/>
    <property type="project" value="UniProtKB-KW"/>
</dbReference>
<dbReference type="GO" id="GO:0006953">
    <property type="term" value="P:acute-phase response"/>
    <property type="evidence" value="ECO:0007669"/>
    <property type="project" value="UniProtKB-KW"/>
</dbReference>
<dbReference type="PROSITE" id="PS00284">
    <property type="entry name" value="SERPIN"/>
    <property type="match status" value="1"/>
</dbReference>
<reference key="1">
    <citation type="journal article" date="1991" name="Biochem. Genet.">
        <title>The equine major plasma serpin multigene family: partial characterization including sequence of the reactive-site regions.</title>
        <authorList>
            <person name="Patterson S.D."/>
            <person name="Bell K."/>
            <person name="Shaw D.C."/>
        </authorList>
    </citation>
    <scope>PROTEIN SEQUENCE</scope>
    <source>
        <tissue>Plasma</tissue>
    </source>
</reference>
<reference key="2">
    <citation type="journal article" date="1990" name="Biochem. Int.">
        <title>The carbohydrate side chains of the major plasma serpins of horse and wallaby: analyses of enzymatic and chemically treated (including 'Smith degradation') protein blots by lectin binding.</title>
        <authorList>
            <person name="Patterson S.D."/>
            <person name="Bell K."/>
        </authorList>
    </citation>
    <scope>STRUCTURE OF CARBOHYDRATES</scope>
</reference>
<evidence type="ECO:0000250" key="1"/>
<evidence type="ECO:0000305" key="2"/>
<protein>
    <recommendedName>
        <fullName>Alpha-1-antiproteinase 4</fullName>
    </recommendedName>
    <alternativeName>
        <fullName>Alpha-1-antitrypsin 4</fullName>
    </alternativeName>
    <alternativeName>
        <fullName>Alpha-1-proteinase inhibitor 4</fullName>
    </alternativeName>
    <alternativeName>
        <fullName>SPI4</fullName>
    </alternativeName>
</protein>
<organism>
    <name type="scientific">Equus caballus</name>
    <name type="common">Horse</name>
    <dbReference type="NCBI Taxonomy" id="9796"/>
    <lineage>
        <taxon>Eukaryota</taxon>
        <taxon>Metazoa</taxon>
        <taxon>Chordata</taxon>
        <taxon>Craniata</taxon>
        <taxon>Vertebrata</taxon>
        <taxon>Euteleostomi</taxon>
        <taxon>Mammalia</taxon>
        <taxon>Eutheria</taxon>
        <taxon>Laurasiatheria</taxon>
        <taxon>Perissodactyla</taxon>
        <taxon>Equidae</taxon>
        <taxon>Equus</taxon>
    </lineage>
</organism>
<name>A1AT4_HORSE</name>
<keyword id="KW-0011">Acute phase</keyword>
<keyword id="KW-0903">Direct protein sequencing</keyword>
<keyword id="KW-0325">Glycoprotein</keyword>
<keyword id="KW-0646">Protease inhibitor</keyword>
<keyword id="KW-1185">Reference proteome</keyword>
<keyword id="KW-0964">Secreted</keyword>
<keyword id="KW-0722">Serine protease inhibitor</keyword>
<proteinExistence type="evidence at protein level"/>
<feature type="chain" id="PRO_0000094094" description="Alpha-1-antiproteinase 4">
    <location>
        <begin position="1"/>
        <end position="43" status="greater than"/>
    </location>
</feature>
<feature type="site" description="Reactive bond">
    <location>
        <begin position="23"/>
        <end position="24"/>
    </location>
</feature>
<feature type="non-consecutive residues" evidence="2">
    <location>
        <begin position="19"/>
        <end position="20"/>
    </location>
</feature>
<feature type="non-terminal residue">
    <location>
        <position position="43"/>
    </location>
</feature>
<sequence length="43" mass="4925">EDLQGTAVQERSAKASDEEEAIRTLLLTNVEFNRPFVLSIYDR</sequence>
<comment type="subcellular location">
    <subcellularLocation>
        <location>Secreted</location>
    </subcellularLocation>
</comment>
<comment type="tissue specificity">
    <text>Plasma.</text>
</comment>
<comment type="domain">
    <text evidence="1">The reactive center loop (RCL) extends out from the body of the protein and directs binding to the target protease. The protease cleaves the serpin at the reactive site within the RCL, establishing a covalent linkage between the serpin reactive site and the active site of the protease. The resulting inactive serpin-protease complex is highly stable (By similarity).</text>
</comment>
<comment type="PTM">
    <text>N-glycosylated with carbohydrates having biantennary side chains.</text>
</comment>
<comment type="similarity">
    <text evidence="2">Belongs to the serpin family.</text>
</comment>